<accession>Q9N593</accession>
<accession>Q6AW18</accession>
<accession>Q8T4K4</accession>
<sequence length="788" mass="88511">MKESAASVAVRPQLREVFERFPADAHRTIEDEIHEMMKCYAFDDAIFLAELHYETDKSNNSESLLLYADCLYRANKKEECYGLLSSVKLSGARLFYLLARVSYDLNKIDDCRGALFEHDDGVIRKDILEEPRVASHANLLHAQMLCDESYMDLALESCQKSLDENILLWSAIITYLRFGGHDLAHTFEKHHRKSNGLYLDSPASSLKSETPSPNVPGPSSSSAASTAEPSRLESSVRRSTRGTIASANRETRNTTSNITPRQSTPGSTPSRINPTAPRKSSRISEMTTRRTESSVTGSRSSLFTEPERPHTRATHSSRNRANAALNSDTENSNASNTRTRSGIASVTRGSSSSQRTNPVRTSIRIADAAAAANKTAKTLSQRRRNEKQPLVSRNSNLARSLSGSTNSVASTASERPSEDEVSQINPPLPSVASSLNNDEPMDIVDGVYDPEYKKLFDVYQHIALIEESISTYNWRSADALFAKLDRDIILNTSMVRLQLGRACFEQSEYRECRNILDDLHKRRKWKVDGTELLSTSMWHLQDTHALSALSQILTTESRERPQSWCAAGNCFSLQRQHTQAIECMERAIQLDKRFAYAYTLLGHELIVQDELDKAAGSFRSALLLSPRDYRAWYGLGLVHLKKEQNLTALTNIQKAVNINPTNRAMLCTLSQIEQQRGQIDTALVLIDRALTLNPLDVACRFNRSRLLFEANRNEECLVELDKLKASSPDEAFIFHLLARVHRRMGNTHLALLNYSWAAELDPRGEQNITDSNVINREEYEDDEYGSPV</sequence>
<feature type="chain" id="PRO_0000435332" description="Cell division cycle protein 27 homolog" evidence="9">
    <location>
        <begin position="1"/>
        <end position="788"/>
    </location>
</feature>
<feature type="repeat" description="TPR 1" evidence="3">
    <location>
        <begin position="561"/>
        <end position="594"/>
    </location>
</feature>
<feature type="repeat" description="TPR 2" evidence="3">
    <location>
        <begin position="596"/>
        <end position="628"/>
    </location>
</feature>
<feature type="repeat" description="TPR 3" evidence="3">
    <location>
        <begin position="629"/>
        <end position="662"/>
    </location>
</feature>
<feature type="repeat" description="TPR 4" evidence="3">
    <location>
        <begin position="664"/>
        <end position="696"/>
    </location>
</feature>
<feature type="repeat" description="TPR 5" evidence="3">
    <location>
        <begin position="731"/>
        <end position="764"/>
    </location>
</feature>
<feature type="region of interest" description="Disordered" evidence="4">
    <location>
        <begin position="198"/>
        <end position="436"/>
    </location>
</feature>
<feature type="compositionally biased region" description="Low complexity" evidence="4">
    <location>
        <begin position="217"/>
        <end position="229"/>
    </location>
</feature>
<feature type="compositionally biased region" description="Polar residues" evidence="4">
    <location>
        <begin position="241"/>
        <end position="273"/>
    </location>
</feature>
<feature type="compositionally biased region" description="Polar residues" evidence="4">
    <location>
        <begin position="293"/>
        <end position="303"/>
    </location>
</feature>
<feature type="compositionally biased region" description="Polar residues" evidence="4">
    <location>
        <begin position="319"/>
        <end position="360"/>
    </location>
</feature>
<feature type="compositionally biased region" description="Low complexity" evidence="4">
    <location>
        <begin position="366"/>
        <end position="378"/>
    </location>
</feature>
<feature type="compositionally biased region" description="Polar residues" evidence="4">
    <location>
        <begin position="391"/>
        <end position="414"/>
    </location>
</feature>
<feature type="splice variant" id="VSP_062477" description="In isoform b." evidence="9">
    <original>S</original>
    <variation>SLQ</variation>
    <location>
        <position position="407"/>
    </location>
</feature>
<feature type="mutagenesis site" description="In ax144; mat phenotype." evidence="5">
    <original>A</original>
    <variation>V</variation>
    <location>
        <position position="45"/>
    </location>
</feature>
<feature type="mutagenesis site" description="In ax161; mat phenotype." evidence="5">
    <original>L</original>
    <variation>F</variation>
    <location>
        <position position="105"/>
    </location>
</feature>
<feature type="mutagenesis site" description="In ax227; mat phenotype." evidence="5">
    <original>L</original>
    <variation>F</variation>
    <location>
        <position position="140"/>
    </location>
</feature>
<feature type="mutagenesis site" description="In ye121; mat phenotype." evidence="7">
    <original>E</original>
    <variation>K</variation>
    <location>
        <position position="467"/>
    </location>
</feature>
<feature type="mutagenesis site" description="In ax520; mat phenotype." evidence="5">
    <original>G</original>
    <variation>R</variation>
    <location>
        <position position="529"/>
    </location>
</feature>
<feature type="mutagenesis site" description="In ax212; mat phenotype." evidence="5">
    <original>E</original>
    <variation>G</variation>
    <location>
        <position position="531"/>
    </location>
</feature>
<feature type="mutagenesis site" description="In ax72; mat phenotype." evidence="5">
    <original>A</original>
    <variation>T</variation>
    <location>
        <position position="580"/>
    </location>
</feature>
<feature type="sequence conflict" description="In Ref. 1; AAL92523." evidence="9" ref="1">
    <original>E</original>
    <variation>K</variation>
    <location>
        <position position="780"/>
    </location>
</feature>
<proteinExistence type="evidence at protein level"/>
<protein>
    <recommendedName>
        <fullName evidence="1">Cell division cycle protein 27 homolog</fullName>
    </recommendedName>
    <alternativeName>
        <fullName evidence="1">Anaphase-promoting complex subunit 3</fullName>
    </alternativeName>
    <alternativeName>
        <fullName evidence="12">Metaphase-to-anaphase transition defect protein 1</fullName>
    </alternativeName>
</protein>
<gene>
    <name evidence="12" type="primary">mat-1</name>
    <name evidence="12" type="synonym">apc-3</name>
    <name evidence="12" type="synonym">cdc-27</name>
    <name evidence="12" type="synonym">pod-5</name>
    <name evidence="12" type="ORF">Y110A7A.17</name>
</gene>
<evidence type="ECO:0000250" key="1">
    <source>
        <dbReference type="UniProtKB" id="P30260"/>
    </source>
</evidence>
<evidence type="ECO:0000250" key="2">
    <source>
        <dbReference type="UniProtKB" id="P38042"/>
    </source>
</evidence>
<evidence type="ECO:0000255" key="3"/>
<evidence type="ECO:0000256" key="4">
    <source>
        <dbReference type="SAM" id="MobiDB-lite"/>
    </source>
</evidence>
<evidence type="ECO:0000269" key="5">
    <source>
    </source>
</evidence>
<evidence type="ECO:0000269" key="6">
    <source>
    </source>
</evidence>
<evidence type="ECO:0000269" key="7">
    <source>
    </source>
</evidence>
<evidence type="ECO:0000269" key="8">
    <source>
    </source>
</evidence>
<evidence type="ECO:0000305" key="9"/>
<evidence type="ECO:0000312" key="10">
    <source>
        <dbReference type="EMBL" id="AAL92523.1"/>
    </source>
</evidence>
<evidence type="ECO:0000312" key="11">
    <source>
        <dbReference type="Proteomes" id="UP000001940"/>
    </source>
</evidence>
<evidence type="ECO:0000312" key="12">
    <source>
        <dbReference type="WormBase" id="Y110A7A.17a"/>
    </source>
</evidence>
<evidence type="ECO:0000312" key="13">
    <source>
        <dbReference type="WormBase" id="Y110A7A.17b"/>
    </source>
</evidence>
<reference evidence="10" key="1">
    <citation type="journal article" date="2003" name="Development">
        <title>Developmental defects observed in hypomorphic anaphase-promoting complex mutants are linked to cell cycle abnormalities.</title>
        <authorList>
            <person name="Shakes D.C."/>
            <person name="Sadler P.L."/>
            <person name="Schumacher J.M."/>
            <person name="Abdolrasulnia M."/>
            <person name="Golden A."/>
        </authorList>
    </citation>
    <scope>NUCLEOTIDE SEQUENCE [MRNA] OF ISOFORM A</scope>
    <scope>FUNCTION</scope>
    <scope>DISRUPTION PHENOTYPE</scope>
    <scope>MUTAGENESIS OF GLU-467</scope>
</reference>
<reference evidence="11" key="2">
    <citation type="journal article" date="1998" name="Science">
        <title>Genome sequence of the nematode C. elegans: a platform for investigating biology.</title>
        <authorList>
            <consortium name="The C. elegans sequencing consortium"/>
        </authorList>
    </citation>
    <scope>NUCLEOTIDE SEQUENCE [LARGE SCALE GENOMIC DNA]</scope>
    <source>
        <strain evidence="11">Bristol N2</strain>
    </source>
</reference>
<reference evidence="9" key="3">
    <citation type="journal article" date="2002" name="Dev. Cell">
        <title>The anaphase-promoting complex and separin are required for embryonic anterior-posterior axis formation.</title>
        <authorList>
            <person name="Rappleye C.A."/>
            <person name="Tagawa A."/>
            <person name="Lyczak R."/>
            <person name="Bowerman B."/>
            <person name="Aroian R.V."/>
        </authorList>
    </citation>
    <scope>FUNCTION</scope>
</reference>
<reference evidence="9" key="4">
    <citation type="journal article" date="2000" name="J. Cell Biol.">
        <title>Metaphase to anaphase (mat) transition-defective mutants in Caenorhabditis elegans.</title>
        <authorList>
            <person name="Golden A."/>
            <person name="Sadler P.L."/>
            <person name="Wallenfang M.R."/>
            <person name="Schumacher J.M."/>
            <person name="Hamill D.R."/>
            <person name="Bates G."/>
            <person name="Bowerman B."/>
            <person name="Seydoux G."/>
            <person name="Shakes D.C."/>
        </authorList>
    </citation>
    <scope>FUNCTION</scope>
    <scope>MUTAGENESIS OF ALA-45; LEU-105; LEU-140; GLY-529; GLU-531 AND ALA-580</scope>
</reference>
<reference evidence="9" key="5">
    <citation type="journal article" date="2004" name="Curr. Biol.">
        <title>The anaphase-promoting complex regulates the abundance of GLR-1 glutamate receptors in the ventral nerve cord of C. elegans.</title>
        <authorList>
            <person name="Juo P."/>
            <person name="Kaplan J.M."/>
        </authorList>
    </citation>
    <scope>FUNCTION</scope>
    <scope>TISSUE SPECIFICITY</scope>
</reference>
<organism evidence="11">
    <name type="scientific">Caenorhabditis elegans</name>
    <dbReference type="NCBI Taxonomy" id="6239"/>
    <lineage>
        <taxon>Eukaryota</taxon>
        <taxon>Metazoa</taxon>
        <taxon>Ecdysozoa</taxon>
        <taxon>Nematoda</taxon>
        <taxon>Chromadorea</taxon>
        <taxon>Rhabditida</taxon>
        <taxon>Rhabditina</taxon>
        <taxon>Rhabditomorpha</taxon>
        <taxon>Rhabditoidea</taxon>
        <taxon>Rhabditidae</taxon>
        <taxon>Peloderinae</taxon>
        <taxon>Caenorhabditis</taxon>
    </lineage>
</organism>
<dbReference type="EMBL" id="FO080728">
    <property type="protein sequence ID" value="CCD66209.1"/>
    <property type="molecule type" value="Genomic_DNA"/>
</dbReference>
<dbReference type="EMBL" id="AY081955">
    <property type="protein sequence ID" value="AAL92523.1"/>
    <property type="molecule type" value="mRNA"/>
</dbReference>
<dbReference type="EMBL" id="FO080728">
    <property type="protein sequence ID" value="CCD66210.1"/>
    <property type="molecule type" value="Genomic_DNA"/>
</dbReference>
<dbReference type="RefSeq" id="NP_001021714.1">
    <molecule id="Q9N593-1"/>
    <property type="nucleotide sequence ID" value="NM_001026543.8"/>
</dbReference>
<dbReference type="RefSeq" id="NP_001021715.1">
    <property type="nucleotide sequence ID" value="NM_001026544.2"/>
</dbReference>
<dbReference type="RefSeq" id="NP_001364721.1">
    <molecule id="Q9N593-2"/>
    <property type="nucleotide sequence ID" value="NM_001377581.3"/>
</dbReference>
<dbReference type="SMR" id="Q9N593"/>
<dbReference type="ComplexPortal" id="CPX-3382">
    <property type="entry name" value="Anaphase-promoting complex"/>
</dbReference>
<dbReference type="DIP" id="DIP-25913N"/>
<dbReference type="FunCoup" id="Q9N593">
    <property type="interactions" value="3729"/>
</dbReference>
<dbReference type="STRING" id="6239.Y110A7A.17a.1"/>
<dbReference type="PaxDb" id="6239-Y110A7A.17a"/>
<dbReference type="PeptideAtlas" id="Q9N593"/>
<dbReference type="EnsemblMetazoa" id="Y110A7A.17a.1">
    <molecule id="Q9N593-1"/>
    <property type="protein sequence ID" value="Y110A7A.17a.1"/>
    <property type="gene ID" value="WBGene00003132"/>
</dbReference>
<dbReference type="EnsemblMetazoa" id="Y110A7A.17b.1">
    <molecule id="Q9N593-2"/>
    <property type="protein sequence ID" value="Y110A7A.17b.1"/>
    <property type="gene ID" value="WBGene00003132"/>
</dbReference>
<dbReference type="GeneID" id="172145"/>
<dbReference type="KEGG" id="cel:CELE_Y110A7A.17"/>
<dbReference type="UCSC" id="Y110A7A.17a">
    <property type="organism name" value="c. elegans"/>
</dbReference>
<dbReference type="AGR" id="WB:WBGene00003132"/>
<dbReference type="CTD" id="172145"/>
<dbReference type="WormBase" id="Y110A7A.17a">
    <molecule id="Q9N593-1"/>
    <property type="protein sequence ID" value="CE23241"/>
    <property type="gene ID" value="WBGene00003132"/>
    <property type="gene designation" value="mat-1"/>
</dbReference>
<dbReference type="WormBase" id="Y110A7A.17b">
    <molecule id="Q9N593-2"/>
    <property type="protein sequence ID" value="CE37056"/>
    <property type="gene ID" value="WBGene00003132"/>
    <property type="gene designation" value="mat-1"/>
</dbReference>
<dbReference type="eggNOG" id="KOG1126">
    <property type="taxonomic scope" value="Eukaryota"/>
</dbReference>
<dbReference type="GeneTree" id="ENSGT00950000182950"/>
<dbReference type="HOGENOM" id="CLU_008850_3_0_1"/>
<dbReference type="InParanoid" id="Q9N593"/>
<dbReference type="OMA" id="WANDNIE"/>
<dbReference type="OrthoDB" id="329563at2759"/>
<dbReference type="PhylomeDB" id="Q9N593"/>
<dbReference type="Reactome" id="R-CEL-983168">
    <property type="pathway name" value="Antigen processing: Ubiquitination &amp; Proteasome degradation"/>
</dbReference>
<dbReference type="UniPathway" id="UPA00143"/>
<dbReference type="PRO" id="PR:Q9N593"/>
<dbReference type="Proteomes" id="UP000001940">
    <property type="component" value="Chromosome I"/>
</dbReference>
<dbReference type="Bgee" id="WBGene00003132">
    <property type="expression patterns" value="Expressed in embryo and 4 other cell types or tissues"/>
</dbReference>
<dbReference type="GO" id="GO:0005680">
    <property type="term" value="C:anaphase-promoting complex"/>
    <property type="evidence" value="ECO:0000318"/>
    <property type="project" value="GO_Central"/>
</dbReference>
<dbReference type="GO" id="GO:0005737">
    <property type="term" value="C:cytoplasm"/>
    <property type="evidence" value="ECO:0000318"/>
    <property type="project" value="GO_Central"/>
</dbReference>
<dbReference type="GO" id="GO:0031145">
    <property type="term" value="P:anaphase-promoting complex-dependent catabolic process"/>
    <property type="evidence" value="ECO:0000318"/>
    <property type="project" value="GO_Central"/>
</dbReference>
<dbReference type="GO" id="GO:0008356">
    <property type="term" value="P:asymmetric cell division"/>
    <property type="evidence" value="ECO:0000315"/>
    <property type="project" value="UniProtKB"/>
</dbReference>
<dbReference type="GO" id="GO:0051301">
    <property type="term" value="P:cell division"/>
    <property type="evidence" value="ECO:0000318"/>
    <property type="project" value="GO_Central"/>
</dbReference>
<dbReference type="GO" id="GO:0060471">
    <property type="term" value="P:cortical granule exocytosis"/>
    <property type="evidence" value="ECO:0000315"/>
    <property type="project" value="UniProtKB"/>
</dbReference>
<dbReference type="GO" id="GO:0051321">
    <property type="term" value="P:meiotic cell cycle"/>
    <property type="evidence" value="ECO:0007669"/>
    <property type="project" value="UniProtKB-KW"/>
</dbReference>
<dbReference type="GO" id="GO:0007091">
    <property type="term" value="P:metaphase/anaphase transition of mitotic cell cycle"/>
    <property type="evidence" value="ECO:0000318"/>
    <property type="project" value="GO_Central"/>
</dbReference>
<dbReference type="GO" id="GO:0009949">
    <property type="term" value="P:polarity specification of anterior/posterior axis"/>
    <property type="evidence" value="ECO:0000315"/>
    <property type="project" value="UniProtKB"/>
</dbReference>
<dbReference type="GO" id="GO:0016567">
    <property type="term" value="P:protein ubiquitination"/>
    <property type="evidence" value="ECO:0000318"/>
    <property type="project" value="GO_Central"/>
</dbReference>
<dbReference type="GO" id="GO:0051445">
    <property type="term" value="P:regulation of meiotic cell cycle"/>
    <property type="evidence" value="ECO:0000303"/>
    <property type="project" value="ComplexPortal"/>
</dbReference>
<dbReference type="GO" id="GO:0007346">
    <property type="term" value="P:regulation of mitotic cell cycle"/>
    <property type="evidence" value="ECO:0000303"/>
    <property type="project" value="ComplexPortal"/>
</dbReference>
<dbReference type="Gene3D" id="1.25.40.10">
    <property type="entry name" value="Tetratricopeptide repeat domain"/>
    <property type="match status" value="4"/>
</dbReference>
<dbReference type="InterPro" id="IPR011990">
    <property type="entry name" value="TPR-like_helical_dom_sf"/>
</dbReference>
<dbReference type="InterPro" id="IPR019734">
    <property type="entry name" value="TPR_rpt"/>
</dbReference>
<dbReference type="PANTHER" id="PTHR12558">
    <property type="entry name" value="CELL DIVISION CYCLE 16,23,27"/>
    <property type="match status" value="1"/>
</dbReference>
<dbReference type="PANTHER" id="PTHR12558:SF13">
    <property type="entry name" value="CELL DIVISION CYCLE PROTEIN 27 HOMOLOG"/>
    <property type="match status" value="1"/>
</dbReference>
<dbReference type="Pfam" id="PF12895">
    <property type="entry name" value="ANAPC3"/>
    <property type="match status" value="1"/>
</dbReference>
<dbReference type="Pfam" id="PF13432">
    <property type="entry name" value="TPR_16"/>
    <property type="match status" value="1"/>
</dbReference>
<dbReference type="Pfam" id="PF13181">
    <property type="entry name" value="TPR_8"/>
    <property type="match status" value="1"/>
</dbReference>
<dbReference type="SMART" id="SM00028">
    <property type="entry name" value="TPR"/>
    <property type="match status" value="5"/>
</dbReference>
<dbReference type="SUPFAM" id="SSF48452">
    <property type="entry name" value="TPR-like"/>
    <property type="match status" value="1"/>
</dbReference>
<dbReference type="PROSITE" id="PS50005">
    <property type="entry name" value="TPR"/>
    <property type="match status" value="5"/>
</dbReference>
<dbReference type="PROSITE" id="PS50293">
    <property type="entry name" value="TPR_REGION"/>
    <property type="match status" value="1"/>
</dbReference>
<keyword id="KW-0025">Alternative splicing</keyword>
<keyword id="KW-0131">Cell cycle</keyword>
<keyword id="KW-0132">Cell division</keyword>
<keyword id="KW-0217">Developmental protein</keyword>
<keyword id="KW-0469">Meiosis</keyword>
<keyword id="KW-0498">Mitosis</keyword>
<keyword id="KW-0539">Nucleus</keyword>
<keyword id="KW-1185">Reference proteome</keyword>
<keyword id="KW-0677">Repeat</keyword>
<keyword id="KW-0802">TPR repeat</keyword>
<keyword id="KW-0833">Ubl conjugation pathway</keyword>
<name>CDC27_CAEEL</name>
<comment type="function">
    <text evidence="1 5 6 7 8">Probable component of the anaphase promoting complex/cyclosome (APC/C), a cell cycle-regulated E3 ubiquitin ligase that controls progression through mitosis and the G1 phase of the cell cycle (By similarity). The APC/C complex acts by mediating ubiquitination and subsequent degradation of target proteins (By similarity). Developmental role in early embryogenesis and the metaphase to anaphase transition in oocyte and spermatocyte meiosis and mitosis in germ cells (PubMed:11134076, PubMed:12620985). Required for embryonic anterior-posterior axis formation (PubMed:11832245). Plays a role in regulating the abundance of glr-1 receptors in postmitotic neurons, which may in turn control animal locomotion (PubMed:15556870).</text>
</comment>
<comment type="pathway">
    <text evidence="9">Protein modification; protein ubiquitination.</text>
</comment>
<comment type="subunit">
    <text evidence="9">The APC/C complex is probably composed of at least 12 subunits: apc-2, apc-10, apc-11, cdc-26, emb-1, emb-27, emb-30, mat-1, mat-2, mat-3, such-1 and gfi-3.</text>
</comment>
<comment type="subcellular location">
    <subcellularLocation>
        <location evidence="2">Nucleus</location>
    </subcellularLocation>
</comment>
<comment type="alternative products">
    <event type="alternative splicing"/>
    <isoform>
        <id>Q9N593-1</id>
        <name evidence="12">a</name>
        <sequence type="displayed"/>
    </isoform>
    <isoform>
        <id>Q9N593-2</id>
        <name evidence="13">b</name>
        <sequence type="described" ref="VSP_062477"/>
    </isoform>
</comment>
<comment type="tissue specificity">
    <text evidence="8">Expressed in the ventral nerve cord.</text>
</comment>
<comment type="disruption phenotype">
    <text evidence="7">RNAi-mediated knockdown results in defective metaphase to anaphase transition (Mat phenotype) and embryos that arrest at the one-cell stage.</text>
</comment>
<comment type="similarity">
    <text evidence="1">Belongs to the APC3/CDC27 family.</text>
</comment>